<keyword id="KW-0175">Coiled coil</keyword>
<keyword id="KW-0489">Methyltransferase</keyword>
<keyword id="KW-0496">Mitochondrion</keyword>
<keyword id="KW-1135">Mitochondrion nucleoid</keyword>
<keyword id="KW-0597">Phosphoprotein</keyword>
<keyword id="KW-1185">Reference proteome</keyword>
<keyword id="KW-0949">S-adenosyl-L-methionine</keyword>
<keyword id="KW-0808">Transferase</keyword>
<keyword id="KW-0809">Transit peptide</keyword>
<keyword id="KW-0819">tRNA processing</keyword>
<organism>
    <name type="scientific">Bos taurus</name>
    <name type="common">Bovine</name>
    <dbReference type="NCBI Taxonomy" id="9913"/>
    <lineage>
        <taxon>Eukaryota</taxon>
        <taxon>Metazoa</taxon>
        <taxon>Chordata</taxon>
        <taxon>Craniata</taxon>
        <taxon>Vertebrata</taxon>
        <taxon>Euteleostomi</taxon>
        <taxon>Mammalia</taxon>
        <taxon>Eutheria</taxon>
        <taxon>Laurasiatheria</taxon>
        <taxon>Artiodactyla</taxon>
        <taxon>Ruminantia</taxon>
        <taxon>Pecora</taxon>
        <taxon>Bovidae</taxon>
        <taxon>Bovinae</taxon>
        <taxon>Bos</taxon>
    </lineage>
</organism>
<comment type="function">
    <text evidence="2">Mitochondrial tRNA N(1)-methyltransferase involved in mitochondrial tRNA maturation. Component of mitochondrial ribonuclease P, a complex composed of TRMT10C/MRPP1, HSD17B10/MRPP2 and PRORP/MRPP3, which cleaves tRNA molecules in their 5'-ends. Together with HSD17B10/MRPP2, forms a subcomplex of the mitochondrial ribonuclease P, named MRPP1-MRPP2 subcomplex, which displays functions that are independent of the ribonuclease P activity. The MRPP1-MRPP2 subcomplex catalyzes the formation of N(1)-methylguanine and N(1)-methyladenine at position 9 (m1G9 and m1A9, respectively) in tRNAs; TRMT10C/MRPP1 acting as the catalytic N(1)-methyltransferase subunit. The MRPP1-MRPP2 subcomplex also acts as a tRNA maturation platform: following 5'-end cleavage by the mitochondrial ribonuclease P complex, the MRPP1-MRPP2 subcomplex enhances the efficiency of 3'-processing catalyzed by ELAC2, retains the tRNA product after ELAC2 processing and presents the nascent tRNA to the mitochondrial CCA tRNA nucleotidyltransferase TRNT1 enzyme. In addition to tRNA N(1)-methyltransferase activity, TRMT10C/MRPP1 also acts as a mRNA N(1)-methyltransferase by mediating methylation of adenosine residues at the N(1) position of MT-ND5 mRNA. Associates with mitochondrial DNA complexes at the nucleoids to initiate RNA processing and ribosome assembly.</text>
</comment>
<comment type="catalytic activity">
    <reaction evidence="2">
        <text>adenosine(9) in tRNA + S-adenosyl-L-methionine = N(1)-methyladenosine(9) in tRNA + S-adenosyl-L-homocysteine + H(+)</text>
        <dbReference type="Rhea" id="RHEA:43148"/>
        <dbReference type="Rhea" id="RHEA-COMP:10363"/>
        <dbReference type="Rhea" id="RHEA-COMP:10364"/>
        <dbReference type="ChEBI" id="CHEBI:15378"/>
        <dbReference type="ChEBI" id="CHEBI:57856"/>
        <dbReference type="ChEBI" id="CHEBI:59789"/>
        <dbReference type="ChEBI" id="CHEBI:74411"/>
        <dbReference type="ChEBI" id="CHEBI:74491"/>
        <dbReference type="EC" id="2.1.1.218"/>
    </reaction>
</comment>
<comment type="catalytic activity">
    <reaction evidence="2">
        <text>guanosine(9) in tRNA + S-adenosyl-L-methionine = N(1)-methylguanosine(9) in tRNA + S-adenosyl-L-homocysteine + H(+)</text>
        <dbReference type="Rhea" id="RHEA:43156"/>
        <dbReference type="Rhea" id="RHEA-COMP:10367"/>
        <dbReference type="Rhea" id="RHEA-COMP:10368"/>
        <dbReference type="ChEBI" id="CHEBI:15378"/>
        <dbReference type="ChEBI" id="CHEBI:57856"/>
        <dbReference type="ChEBI" id="CHEBI:59789"/>
        <dbReference type="ChEBI" id="CHEBI:73542"/>
        <dbReference type="ChEBI" id="CHEBI:74269"/>
        <dbReference type="EC" id="2.1.1.221"/>
    </reaction>
</comment>
<comment type="catalytic activity">
    <reaction evidence="2">
        <text>an adenosine in mRNA + S-adenosyl-L-methionine = an N(1)-methyladenosine in mRNA + S-adenosyl-L-homocysteine + H(+)</text>
        <dbReference type="Rhea" id="RHEA:55392"/>
        <dbReference type="Rhea" id="RHEA-COMP:12414"/>
        <dbReference type="Rhea" id="RHEA-COMP:12415"/>
        <dbReference type="ChEBI" id="CHEBI:15378"/>
        <dbReference type="ChEBI" id="CHEBI:57856"/>
        <dbReference type="ChEBI" id="CHEBI:59789"/>
        <dbReference type="ChEBI" id="CHEBI:74411"/>
        <dbReference type="ChEBI" id="CHEBI:74491"/>
    </reaction>
</comment>
<comment type="subunit">
    <text evidence="2">Component of mitochondrial ribonuclease P, a complex composed of TRMT10C/MRPP1, HSD17B10/MRPP2 and PRORP/MRPP3. Interacts with HSD17B10/MRPP2; forming the MRPP1-MRPP2 subcomplex of the mitochondrial ribonuclease P complex. Interacts with GRSF1.</text>
</comment>
<comment type="subcellular location">
    <subcellularLocation>
        <location evidence="2">Mitochondrion matrix</location>
        <location evidence="2">Mitochondrion nucleoid</location>
    </subcellularLocation>
</comment>
<comment type="similarity">
    <text evidence="4">Belongs to the class IV-like SAM-binding methyltransferase superfamily. TRM10 family.</text>
</comment>
<comment type="caution">
    <text evidence="5">It is uncertain whether Met-1 or Met-7 is the initiator.</text>
</comment>
<comment type="sequence caution" evidence="5">
    <conflict type="erroneous initiation">
        <sequence resource="EMBL-CDS" id="AAI12775"/>
    </conflict>
</comment>
<feature type="transit peptide" description="Mitochondrion" evidence="3">
    <location>
        <begin position="1"/>
        <end position="41"/>
    </location>
</feature>
<feature type="chain" id="PRO_0000311308" description="tRNA methyltransferase 10 homolog C">
    <location>
        <begin position="42"/>
        <end position="426"/>
    </location>
</feature>
<feature type="domain" description="SAM-dependent MTase TRM10-type" evidence="4">
    <location>
        <begin position="193"/>
        <end position="385"/>
    </location>
</feature>
<feature type="coiled-coil region" evidence="3">
    <location>
        <begin position="138"/>
        <end position="166"/>
    </location>
</feature>
<feature type="modified residue" description="Phosphoserine" evidence="1">
    <location>
        <position position="86"/>
    </location>
</feature>
<reference key="1">
    <citation type="submission" date="2006-01" db="EMBL/GenBank/DDBJ databases">
        <authorList>
            <consortium name="NIH - Mammalian Gene Collection (MGC) project"/>
        </authorList>
    </citation>
    <scope>NUCLEOTIDE SEQUENCE [LARGE SCALE MRNA]</scope>
    <source>
        <strain>Hereford</strain>
        <tissue>Heart ventricle</tissue>
    </source>
</reference>
<gene>
    <name evidence="2" type="primary">TRMT10C</name>
    <name evidence="2" type="synonym">MRPP1</name>
    <name evidence="2" type="synonym">RG9MTD1</name>
</gene>
<evidence type="ECO:0000250" key="1">
    <source>
        <dbReference type="UniProtKB" id="Q3UFY8"/>
    </source>
</evidence>
<evidence type="ECO:0000250" key="2">
    <source>
        <dbReference type="UniProtKB" id="Q7L0Y3"/>
    </source>
</evidence>
<evidence type="ECO:0000255" key="3"/>
<evidence type="ECO:0000255" key="4">
    <source>
        <dbReference type="PROSITE-ProRule" id="PRU01012"/>
    </source>
</evidence>
<evidence type="ECO:0000305" key="5"/>
<proteinExistence type="evidence at transcript level"/>
<name>TM10C_BOVIN</name>
<protein>
    <recommendedName>
        <fullName evidence="5">tRNA methyltransferase 10 homolog C</fullName>
    </recommendedName>
    <alternativeName>
        <fullName evidence="2">Mitochondrial ribonuclease P protein 1</fullName>
        <shortName evidence="2">Mitochondrial RNase P protein 1</shortName>
    </alternativeName>
    <alternativeName>
        <fullName evidence="2">RNA (guanine-9-)-methyltransferase domain-containing protein 1</fullName>
    </alternativeName>
    <alternativeName>
        <fullName evidence="2">mRNA methyladenosine-N(1)-methyltransferase</fullName>
        <ecNumber evidence="2">2.1.1.-</ecNumber>
    </alternativeName>
    <alternativeName>
        <fullName evidence="2">tRNA (adenine(9)-N(1))-methyltransferase</fullName>
        <ecNumber evidence="2">2.1.1.218</ecNumber>
    </alternativeName>
    <alternativeName>
        <fullName evidence="2">tRNA (guanine(9)-N(1))-methyltransferase</fullName>
        <ecNumber evidence="2">2.1.1.221</ecNumber>
    </alternativeName>
</protein>
<accession>Q2KI45</accession>
<sequence>MPVLLKMSVSITFLRPFARVLVPFTLHRKRRVLYSTIMQRYMSSKIPAASYPNKESTPPSEELELDRWKITMKSSVQEEDVSTATSSEDEDPLAATRELVEMWRLLGKEVPEHFSEEELKTLMECVSKSSKRKYLKYLYIKEKMKKARQIKKEMKKAEKEEPKKDQLPETIKEDKQQNFLFLRLWDRNMDIAMGWKGAQAMQFGQPLVFDMAYDDHMKPKELQNAVSQLLESEGCNRRNVDPFHIYFCNLKTGGAYYKELVKRYGEKWNKLLLTATEKSHVDLFPKDSIIYLTADSPNVMTTFKHDKIYIVGSFVDKNMQPGTSLAKAKRLKLATECLPLDKYLQWDTGTKNLTLDQMMRILLCLKNTGSWEEALKFVPSRKHAGYLEISQHSQEFLNRMKKSKTFNSFPRGSINRHRKSSLKENI</sequence>
<dbReference type="EC" id="2.1.1.-" evidence="2"/>
<dbReference type="EC" id="2.1.1.218" evidence="2"/>
<dbReference type="EC" id="2.1.1.221" evidence="2"/>
<dbReference type="EMBL" id="BC112774">
    <property type="protein sequence ID" value="AAI12775.1"/>
    <property type="status" value="ALT_INIT"/>
    <property type="molecule type" value="mRNA"/>
</dbReference>
<dbReference type="RefSeq" id="NP_001039788.1">
    <property type="nucleotide sequence ID" value="NM_001046323.2"/>
</dbReference>
<dbReference type="RefSeq" id="XP_005201287.1">
    <property type="nucleotide sequence ID" value="XM_005201230.5"/>
</dbReference>
<dbReference type="RefSeq" id="XP_005201288.1">
    <property type="nucleotide sequence ID" value="XM_005201231.5"/>
</dbReference>
<dbReference type="RefSeq" id="XP_005201289.1">
    <property type="nucleotide sequence ID" value="XM_005201232.5"/>
</dbReference>
<dbReference type="SMR" id="Q2KI45"/>
<dbReference type="FunCoup" id="Q2KI45">
    <property type="interactions" value="2660"/>
</dbReference>
<dbReference type="STRING" id="9913.ENSBTAP00000033017"/>
<dbReference type="PaxDb" id="9913-ENSBTAP00000033017"/>
<dbReference type="Ensembl" id="ENSBTAT00000033093.4">
    <property type="protein sequence ID" value="ENSBTAP00000033017.4"/>
    <property type="gene ID" value="ENSBTAG00000024027.4"/>
</dbReference>
<dbReference type="Ensembl" id="ENSBTAT00000133821.1">
    <property type="protein sequence ID" value="ENSBTAP00000097567.1"/>
    <property type="gene ID" value="ENSBTAG00000024027.4"/>
</dbReference>
<dbReference type="GeneID" id="532418"/>
<dbReference type="KEGG" id="bta:532418"/>
<dbReference type="CTD" id="54931"/>
<dbReference type="VGNC" id="VGNC:36367">
    <property type="gene designation" value="TRMT10C"/>
</dbReference>
<dbReference type="eggNOG" id="KOG2967">
    <property type="taxonomic scope" value="Eukaryota"/>
</dbReference>
<dbReference type="GeneTree" id="ENSGT00530000063169"/>
<dbReference type="HOGENOM" id="CLU_034384_3_1_1"/>
<dbReference type="InParanoid" id="Q2KI45"/>
<dbReference type="OrthoDB" id="9976048at2759"/>
<dbReference type="TreeFam" id="TF319795"/>
<dbReference type="Proteomes" id="UP000009136">
    <property type="component" value="Chromosome 1"/>
</dbReference>
<dbReference type="GO" id="GO:0042645">
    <property type="term" value="C:mitochondrial nucleoid"/>
    <property type="evidence" value="ECO:0000250"/>
    <property type="project" value="UniProtKB"/>
</dbReference>
<dbReference type="GO" id="GO:0030678">
    <property type="term" value="C:mitochondrial ribonuclease P complex"/>
    <property type="evidence" value="ECO:0007669"/>
    <property type="project" value="Ensembl"/>
</dbReference>
<dbReference type="GO" id="GO:0005739">
    <property type="term" value="C:mitochondrion"/>
    <property type="evidence" value="ECO:0000250"/>
    <property type="project" value="UniProtKB"/>
</dbReference>
<dbReference type="GO" id="GO:0005654">
    <property type="term" value="C:nucleoplasm"/>
    <property type="evidence" value="ECO:0000318"/>
    <property type="project" value="GO_Central"/>
</dbReference>
<dbReference type="GO" id="GO:0005634">
    <property type="term" value="C:nucleus"/>
    <property type="evidence" value="ECO:0000318"/>
    <property type="project" value="GO_Central"/>
</dbReference>
<dbReference type="GO" id="GO:0043527">
    <property type="term" value="C:tRNA methyltransferase complex"/>
    <property type="evidence" value="ECO:0007669"/>
    <property type="project" value="Ensembl"/>
</dbReference>
<dbReference type="GO" id="GO:0042802">
    <property type="term" value="F:identical protein binding"/>
    <property type="evidence" value="ECO:0007669"/>
    <property type="project" value="Ensembl"/>
</dbReference>
<dbReference type="GO" id="GO:0160106">
    <property type="term" value="F:tRNA (adenine(9)-N1)-methyltransferase activity"/>
    <property type="evidence" value="ECO:0007669"/>
    <property type="project" value="UniProtKB-EC"/>
</dbReference>
<dbReference type="GO" id="GO:0052905">
    <property type="term" value="F:tRNA (guanosine(9)-N1)-methyltransferase activity"/>
    <property type="evidence" value="ECO:0007669"/>
    <property type="project" value="UniProtKB-EC"/>
</dbReference>
<dbReference type="GO" id="GO:0000049">
    <property type="term" value="F:tRNA binding"/>
    <property type="evidence" value="ECO:0000250"/>
    <property type="project" value="UniProtKB"/>
</dbReference>
<dbReference type="GO" id="GO:0000964">
    <property type="term" value="P:mitochondrial RNA 5'-end processing"/>
    <property type="evidence" value="ECO:0000250"/>
    <property type="project" value="UniProtKB"/>
</dbReference>
<dbReference type="GO" id="GO:1990180">
    <property type="term" value="P:mitochondrial tRNA 3'-end processing"/>
    <property type="evidence" value="ECO:0007669"/>
    <property type="project" value="Ensembl"/>
</dbReference>
<dbReference type="GO" id="GO:0097745">
    <property type="term" value="P:mitochondrial tRNA 5'-end processing"/>
    <property type="evidence" value="ECO:0000250"/>
    <property type="project" value="UniProtKB"/>
</dbReference>
<dbReference type="GO" id="GO:0070901">
    <property type="term" value="P:mitochondrial tRNA methylation"/>
    <property type="evidence" value="ECO:0007669"/>
    <property type="project" value="Ensembl"/>
</dbReference>
<dbReference type="GO" id="GO:0090646">
    <property type="term" value="P:mitochondrial tRNA processing"/>
    <property type="evidence" value="ECO:0000250"/>
    <property type="project" value="UniProtKB"/>
</dbReference>
<dbReference type="GO" id="GO:0006397">
    <property type="term" value="P:mRNA processing"/>
    <property type="evidence" value="ECO:0000250"/>
    <property type="project" value="UniProtKB"/>
</dbReference>
<dbReference type="GO" id="GO:0070131">
    <property type="term" value="P:positive regulation of mitochondrial translation"/>
    <property type="evidence" value="ECO:0000250"/>
    <property type="project" value="UniProtKB"/>
</dbReference>
<dbReference type="CDD" id="cd18102">
    <property type="entry name" value="Trm10_MRRP1"/>
    <property type="match status" value="1"/>
</dbReference>
<dbReference type="FunFam" id="3.40.1280.30:FF:000003">
    <property type="entry name" value="tRNA methyltransferase 10C, mitochondrial RNase P subunit"/>
    <property type="match status" value="1"/>
</dbReference>
<dbReference type="Gene3D" id="3.40.1280.30">
    <property type="match status" value="1"/>
</dbReference>
<dbReference type="InterPro" id="IPR028564">
    <property type="entry name" value="MT_TRM10-typ"/>
</dbReference>
<dbReference type="InterPro" id="IPR038459">
    <property type="entry name" value="MT_TRM10-typ_sf"/>
</dbReference>
<dbReference type="InterPro" id="IPR025812">
    <property type="entry name" value="Trm10_C_MTase_dom"/>
</dbReference>
<dbReference type="InterPro" id="IPR007356">
    <property type="entry name" value="tRNA_m1G_MeTrfase_euk"/>
</dbReference>
<dbReference type="InterPro" id="IPR016009">
    <property type="entry name" value="tRNA_MeTrfase_TRMD/TRM10"/>
</dbReference>
<dbReference type="PANTHER" id="PTHR13563">
    <property type="entry name" value="TRNA (GUANINE-9-) METHYLTRANSFERASE"/>
    <property type="match status" value="1"/>
</dbReference>
<dbReference type="PANTHER" id="PTHR13563:SF5">
    <property type="entry name" value="TRNA METHYLTRANSFERASE 10 HOMOLOG C"/>
    <property type="match status" value="1"/>
</dbReference>
<dbReference type="Pfam" id="PF01746">
    <property type="entry name" value="tRNA_m1G_MT"/>
    <property type="match status" value="1"/>
</dbReference>
<dbReference type="PROSITE" id="PS51675">
    <property type="entry name" value="SAM_MT_TRM10"/>
    <property type="match status" value="1"/>
</dbReference>